<evidence type="ECO:0000250" key="1">
    <source>
        <dbReference type="UniProtKB" id="Q9LVF4"/>
    </source>
</evidence>
<evidence type="ECO:0000255" key="2"/>
<evidence type="ECO:0000256" key="3">
    <source>
        <dbReference type="SAM" id="MobiDB-lite"/>
    </source>
</evidence>
<evidence type="ECO:0000269" key="4">
    <source>
    </source>
</evidence>
<evidence type="ECO:0000303" key="5">
    <source>
    </source>
</evidence>
<evidence type="ECO:0000305" key="6"/>
<evidence type="ECO:0000312" key="7">
    <source>
        <dbReference type="Araport" id="AT4G24310"/>
    </source>
</evidence>
<evidence type="ECO:0000312" key="8">
    <source>
        <dbReference type="EMBL" id="CAB45066.1"/>
    </source>
</evidence>
<feature type="chain" id="PRO_0000441610" description="Protein DMP3" evidence="2">
    <location>
        <begin position="1"/>
        <end position="213"/>
    </location>
</feature>
<feature type="transmembrane region" description="Helical" evidence="2">
    <location>
        <begin position="45"/>
        <end position="65"/>
    </location>
</feature>
<feature type="transmembrane region" description="Helical" evidence="2">
    <location>
        <begin position="74"/>
        <end position="94"/>
    </location>
</feature>
<feature type="transmembrane region" description="Helical" evidence="2">
    <location>
        <begin position="136"/>
        <end position="156"/>
    </location>
</feature>
<feature type="transmembrane region" description="Helical" evidence="2">
    <location>
        <begin position="176"/>
        <end position="196"/>
    </location>
</feature>
<feature type="region of interest" description="Disordered" evidence="3">
    <location>
        <begin position="1"/>
        <end position="27"/>
    </location>
</feature>
<dbReference type="EMBL" id="AL078637">
    <property type="protein sequence ID" value="CAB45066.1"/>
    <property type="molecule type" value="Genomic_DNA"/>
</dbReference>
<dbReference type="EMBL" id="AL161561">
    <property type="protein sequence ID" value="CAB79341.1"/>
    <property type="molecule type" value="Genomic_DNA"/>
</dbReference>
<dbReference type="EMBL" id="CP002687">
    <property type="protein sequence ID" value="AEE84888.1"/>
    <property type="molecule type" value="Genomic_DNA"/>
</dbReference>
<dbReference type="EMBL" id="AK228084">
    <property type="protein sequence ID" value="BAF00043.1"/>
    <property type="molecule type" value="mRNA"/>
</dbReference>
<dbReference type="EMBL" id="BT004778">
    <property type="protein sequence ID" value="AAO44044.1"/>
    <property type="molecule type" value="mRNA"/>
</dbReference>
<dbReference type="PIR" id="T09894">
    <property type="entry name" value="T09894"/>
</dbReference>
<dbReference type="RefSeq" id="NP_194162.1">
    <property type="nucleotide sequence ID" value="NM_118564.3"/>
</dbReference>
<dbReference type="IntAct" id="Q9STW3">
    <property type="interactions" value="10"/>
</dbReference>
<dbReference type="STRING" id="3702.Q9STW3"/>
<dbReference type="PaxDb" id="3702-AT4G24310.1"/>
<dbReference type="ProteomicsDB" id="221901"/>
<dbReference type="EnsemblPlants" id="AT4G24310.1">
    <property type="protein sequence ID" value="AT4G24310.1"/>
    <property type="gene ID" value="AT4G24310"/>
</dbReference>
<dbReference type="GeneID" id="828534"/>
<dbReference type="Gramene" id="AT4G24310.1">
    <property type="protein sequence ID" value="AT4G24310.1"/>
    <property type="gene ID" value="AT4G24310"/>
</dbReference>
<dbReference type="KEGG" id="ath:AT4G24310"/>
<dbReference type="Araport" id="AT4G24310"/>
<dbReference type="TAIR" id="AT4G24310">
    <property type="gene designation" value="DMP3"/>
</dbReference>
<dbReference type="eggNOG" id="ENOG502RYBP">
    <property type="taxonomic scope" value="Eukaryota"/>
</dbReference>
<dbReference type="HOGENOM" id="CLU_075936_2_1_1"/>
<dbReference type="InParanoid" id="Q9STW3"/>
<dbReference type="OMA" id="LWLIDYP"/>
<dbReference type="PhylomeDB" id="Q9STW3"/>
<dbReference type="PRO" id="PR:Q9STW3"/>
<dbReference type="Proteomes" id="UP000006548">
    <property type="component" value="Chromosome 4"/>
</dbReference>
<dbReference type="ExpressionAtlas" id="Q9STW3">
    <property type="expression patterns" value="baseline and differential"/>
</dbReference>
<dbReference type="GO" id="GO:0005783">
    <property type="term" value="C:endoplasmic reticulum"/>
    <property type="evidence" value="ECO:0000314"/>
    <property type="project" value="TAIR"/>
</dbReference>
<dbReference type="GO" id="GO:0005789">
    <property type="term" value="C:endoplasmic reticulum membrane"/>
    <property type="evidence" value="ECO:0007669"/>
    <property type="project" value="UniProtKB-SubCell"/>
</dbReference>
<dbReference type="GO" id="GO:0010256">
    <property type="term" value="P:endomembrane system organization"/>
    <property type="evidence" value="ECO:0000250"/>
    <property type="project" value="UniProtKB"/>
</dbReference>
<dbReference type="GO" id="GO:0090693">
    <property type="term" value="P:plant organ senescence"/>
    <property type="evidence" value="ECO:0000270"/>
    <property type="project" value="UniProtKB"/>
</dbReference>
<dbReference type="InterPro" id="IPR007770">
    <property type="entry name" value="DMP"/>
</dbReference>
<dbReference type="PANTHER" id="PTHR31621">
    <property type="entry name" value="PROTEIN DMP3"/>
    <property type="match status" value="1"/>
</dbReference>
<dbReference type="PANTHER" id="PTHR31621:SF75">
    <property type="entry name" value="PROTEIN DMP3"/>
    <property type="match status" value="1"/>
</dbReference>
<dbReference type="Pfam" id="PF05078">
    <property type="entry name" value="DUF679"/>
    <property type="match status" value="1"/>
</dbReference>
<proteinExistence type="evidence at transcript level"/>
<protein>
    <recommendedName>
        <fullName evidence="5">Protein DMP3</fullName>
        <shortName evidence="5">AtDMP3</shortName>
    </recommendedName>
</protein>
<gene>
    <name evidence="5" type="primary">DMP3</name>
    <name evidence="7" type="ordered locus">At4g24310</name>
    <name evidence="8" type="ORF">T22A6.140</name>
</gene>
<accession>Q9STW3</accession>
<organism>
    <name type="scientific">Arabidopsis thaliana</name>
    <name type="common">Mouse-ear cress</name>
    <dbReference type="NCBI Taxonomy" id="3702"/>
    <lineage>
        <taxon>Eukaryota</taxon>
        <taxon>Viridiplantae</taxon>
        <taxon>Streptophyta</taxon>
        <taxon>Embryophyta</taxon>
        <taxon>Tracheophyta</taxon>
        <taxon>Spermatophyta</taxon>
        <taxon>Magnoliopsida</taxon>
        <taxon>eudicotyledons</taxon>
        <taxon>Gunneridae</taxon>
        <taxon>Pentapetalae</taxon>
        <taxon>rosids</taxon>
        <taxon>malvids</taxon>
        <taxon>Brassicales</taxon>
        <taxon>Brassicaceae</taxon>
        <taxon>Camelineae</taxon>
        <taxon>Arabidopsis</taxon>
    </lineage>
</organism>
<name>DMP3_ARATH</name>
<reference key="1">
    <citation type="journal article" date="1999" name="Nature">
        <title>Sequence and analysis of chromosome 4 of the plant Arabidopsis thaliana.</title>
        <authorList>
            <person name="Mayer K.F.X."/>
            <person name="Schueller C."/>
            <person name="Wambutt R."/>
            <person name="Murphy G."/>
            <person name="Volckaert G."/>
            <person name="Pohl T."/>
            <person name="Duesterhoeft A."/>
            <person name="Stiekema W."/>
            <person name="Entian K.-D."/>
            <person name="Terryn N."/>
            <person name="Harris B."/>
            <person name="Ansorge W."/>
            <person name="Brandt P."/>
            <person name="Grivell L.A."/>
            <person name="Rieger M."/>
            <person name="Weichselgartner M."/>
            <person name="de Simone V."/>
            <person name="Obermaier B."/>
            <person name="Mache R."/>
            <person name="Mueller M."/>
            <person name="Kreis M."/>
            <person name="Delseny M."/>
            <person name="Puigdomenech P."/>
            <person name="Watson M."/>
            <person name="Schmidtheini T."/>
            <person name="Reichert B."/>
            <person name="Portetelle D."/>
            <person name="Perez-Alonso M."/>
            <person name="Boutry M."/>
            <person name="Bancroft I."/>
            <person name="Vos P."/>
            <person name="Hoheisel J."/>
            <person name="Zimmermann W."/>
            <person name="Wedler H."/>
            <person name="Ridley P."/>
            <person name="Langham S.-A."/>
            <person name="McCullagh B."/>
            <person name="Bilham L."/>
            <person name="Robben J."/>
            <person name="van der Schueren J."/>
            <person name="Grymonprez B."/>
            <person name="Chuang Y.-J."/>
            <person name="Vandenbussche F."/>
            <person name="Braeken M."/>
            <person name="Weltjens I."/>
            <person name="Voet M."/>
            <person name="Bastiaens I."/>
            <person name="Aert R."/>
            <person name="Defoor E."/>
            <person name="Weitzenegger T."/>
            <person name="Bothe G."/>
            <person name="Ramsperger U."/>
            <person name="Hilbert H."/>
            <person name="Braun M."/>
            <person name="Holzer E."/>
            <person name="Brandt A."/>
            <person name="Peters S."/>
            <person name="van Staveren M."/>
            <person name="Dirkse W."/>
            <person name="Mooijman P."/>
            <person name="Klein Lankhorst R."/>
            <person name="Rose M."/>
            <person name="Hauf J."/>
            <person name="Koetter P."/>
            <person name="Berneiser S."/>
            <person name="Hempel S."/>
            <person name="Feldpausch M."/>
            <person name="Lamberth S."/>
            <person name="Van den Daele H."/>
            <person name="De Keyser A."/>
            <person name="Buysshaert C."/>
            <person name="Gielen J."/>
            <person name="Villarroel R."/>
            <person name="De Clercq R."/>
            <person name="van Montagu M."/>
            <person name="Rogers J."/>
            <person name="Cronin A."/>
            <person name="Quail M.A."/>
            <person name="Bray-Allen S."/>
            <person name="Clark L."/>
            <person name="Doggett J."/>
            <person name="Hall S."/>
            <person name="Kay M."/>
            <person name="Lennard N."/>
            <person name="McLay K."/>
            <person name="Mayes R."/>
            <person name="Pettett A."/>
            <person name="Rajandream M.A."/>
            <person name="Lyne M."/>
            <person name="Benes V."/>
            <person name="Rechmann S."/>
            <person name="Borkova D."/>
            <person name="Bloecker H."/>
            <person name="Scharfe M."/>
            <person name="Grimm M."/>
            <person name="Loehnert T.-H."/>
            <person name="Dose S."/>
            <person name="de Haan M."/>
            <person name="Maarse A.C."/>
            <person name="Schaefer M."/>
            <person name="Mueller-Auer S."/>
            <person name="Gabel C."/>
            <person name="Fuchs M."/>
            <person name="Fartmann B."/>
            <person name="Granderath K."/>
            <person name="Dauner D."/>
            <person name="Herzl A."/>
            <person name="Neumann S."/>
            <person name="Argiriou A."/>
            <person name="Vitale D."/>
            <person name="Liguori R."/>
            <person name="Piravandi E."/>
            <person name="Massenet O."/>
            <person name="Quigley F."/>
            <person name="Clabauld G."/>
            <person name="Muendlein A."/>
            <person name="Felber R."/>
            <person name="Schnabl S."/>
            <person name="Hiller R."/>
            <person name="Schmidt W."/>
            <person name="Lecharny A."/>
            <person name="Aubourg S."/>
            <person name="Chefdor F."/>
            <person name="Cooke R."/>
            <person name="Berger C."/>
            <person name="Monfort A."/>
            <person name="Casacuberta E."/>
            <person name="Gibbons T."/>
            <person name="Weber N."/>
            <person name="Vandenbol M."/>
            <person name="Bargues M."/>
            <person name="Terol J."/>
            <person name="Torres A."/>
            <person name="Perez-Perez A."/>
            <person name="Purnelle B."/>
            <person name="Bent E."/>
            <person name="Johnson S."/>
            <person name="Tacon D."/>
            <person name="Jesse T."/>
            <person name="Heijnen L."/>
            <person name="Schwarz S."/>
            <person name="Scholler P."/>
            <person name="Heber S."/>
            <person name="Francs P."/>
            <person name="Bielke C."/>
            <person name="Frishman D."/>
            <person name="Haase D."/>
            <person name="Lemcke K."/>
            <person name="Mewes H.-W."/>
            <person name="Stocker S."/>
            <person name="Zaccaria P."/>
            <person name="Bevan M."/>
            <person name="Wilson R.K."/>
            <person name="de la Bastide M."/>
            <person name="Habermann K."/>
            <person name="Parnell L."/>
            <person name="Dedhia N."/>
            <person name="Gnoj L."/>
            <person name="Schutz K."/>
            <person name="Huang E."/>
            <person name="Spiegel L."/>
            <person name="Sekhon M."/>
            <person name="Murray J."/>
            <person name="Sheet P."/>
            <person name="Cordes M."/>
            <person name="Abu-Threideh J."/>
            <person name="Stoneking T."/>
            <person name="Kalicki J."/>
            <person name="Graves T."/>
            <person name="Harmon G."/>
            <person name="Edwards J."/>
            <person name="Latreille P."/>
            <person name="Courtney L."/>
            <person name="Cloud J."/>
            <person name="Abbott A."/>
            <person name="Scott K."/>
            <person name="Johnson D."/>
            <person name="Minx P."/>
            <person name="Bentley D."/>
            <person name="Fulton B."/>
            <person name="Miller N."/>
            <person name="Greco T."/>
            <person name="Kemp K."/>
            <person name="Kramer J."/>
            <person name="Fulton L."/>
            <person name="Mardis E."/>
            <person name="Dante M."/>
            <person name="Pepin K."/>
            <person name="Hillier L.W."/>
            <person name="Nelson J."/>
            <person name="Spieth J."/>
            <person name="Ryan E."/>
            <person name="Andrews S."/>
            <person name="Geisel C."/>
            <person name="Layman D."/>
            <person name="Du H."/>
            <person name="Ali J."/>
            <person name="Berghoff A."/>
            <person name="Jones K."/>
            <person name="Drone K."/>
            <person name="Cotton M."/>
            <person name="Joshu C."/>
            <person name="Antonoiu B."/>
            <person name="Zidanic M."/>
            <person name="Strong C."/>
            <person name="Sun H."/>
            <person name="Lamar B."/>
            <person name="Yordan C."/>
            <person name="Ma P."/>
            <person name="Zhong J."/>
            <person name="Preston R."/>
            <person name="Vil D."/>
            <person name="Shekher M."/>
            <person name="Matero A."/>
            <person name="Shah R."/>
            <person name="Swaby I.K."/>
            <person name="O'Shaughnessy A."/>
            <person name="Rodriguez M."/>
            <person name="Hoffman J."/>
            <person name="Till S."/>
            <person name="Granat S."/>
            <person name="Shohdy N."/>
            <person name="Hasegawa A."/>
            <person name="Hameed A."/>
            <person name="Lodhi M."/>
            <person name="Johnson A."/>
            <person name="Chen E."/>
            <person name="Marra M.A."/>
            <person name="Martienssen R."/>
            <person name="McCombie W.R."/>
        </authorList>
    </citation>
    <scope>NUCLEOTIDE SEQUENCE [LARGE SCALE GENOMIC DNA]</scope>
    <source>
        <strain>cv. Columbia</strain>
    </source>
</reference>
<reference key="2">
    <citation type="journal article" date="2017" name="Plant J.">
        <title>Araport11: a complete reannotation of the Arabidopsis thaliana reference genome.</title>
        <authorList>
            <person name="Cheng C.Y."/>
            <person name="Krishnakumar V."/>
            <person name="Chan A.P."/>
            <person name="Thibaud-Nissen F."/>
            <person name="Schobel S."/>
            <person name="Town C.D."/>
        </authorList>
    </citation>
    <scope>GENOME REANNOTATION</scope>
    <source>
        <strain>cv. Columbia</strain>
    </source>
</reference>
<reference key="3">
    <citation type="journal article" date="2003" name="Science">
        <title>Empirical analysis of transcriptional activity in the Arabidopsis genome.</title>
        <authorList>
            <person name="Yamada K."/>
            <person name="Lim J."/>
            <person name="Dale J.M."/>
            <person name="Chen H."/>
            <person name="Shinn P."/>
            <person name="Palm C.J."/>
            <person name="Southwick A.M."/>
            <person name="Wu H.C."/>
            <person name="Kim C.J."/>
            <person name="Nguyen M."/>
            <person name="Pham P.K."/>
            <person name="Cheuk R.F."/>
            <person name="Karlin-Newmann G."/>
            <person name="Liu S.X."/>
            <person name="Lam B."/>
            <person name="Sakano H."/>
            <person name="Wu T."/>
            <person name="Yu G."/>
            <person name="Miranda M."/>
            <person name="Quach H.L."/>
            <person name="Tripp M."/>
            <person name="Chang C.H."/>
            <person name="Lee J.M."/>
            <person name="Toriumi M.J."/>
            <person name="Chan M.M."/>
            <person name="Tang C.C."/>
            <person name="Onodera C.S."/>
            <person name="Deng J.M."/>
            <person name="Akiyama K."/>
            <person name="Ansari Y."/>
            <person name="Arakawa T."/>
            <person name="Banh J."/>
            <person name="Banno F."/>
            <person name="Bowser L."/>
            <person name="Brooks S.Y."/>
            <person name="Carninci P."/>
            <person name="Chao Q."/>
            <person name="Choy N."/>
            <person name="Enju A."/>
            <person name="Goldsmith A.D."/>
            <person name="Gurjal M."/>
            <person name="Hansen N.F."/>
            <person name="Hayashizaki Y."/>
            <person name="Johnson-Hopson C."/>
            <person name="Hsuan V.W."/>
            <person name="Iida K."/>
            <person name="Karnes M."/>
            <person name="Khan S."/>
            <person name="Koesema E."/>
            <person name="Ishida J."/>
            <person name="Jiang P.X."/>
            <person name="Jones T."/>
            <person name="Kawai J."/>
            <person name="Kamiya A."/>
            <person name="Meyers C."/>
            <person name="Nakajima M."/>
            <person name="Narusaka M."/>
            <person name="Seki M."/>
            <person name="Sakurai T."/>
            <person name="Satou M."/>
            <person name="Tamse R."/>
            <person name="Vaysberg M."/>
            <person name="Wallender E.K."/>
            <person name="Wong C."/>
            <person name="Yamamura Y."/>
            <person name="Yuan S."/>
            <person name="Shinozaki K."/>
            <person name="Davis R.W."/>
            <person name="Theologis A."/>
            <person name="Ecker J.R."/>
        </authorList>
    </citation>
    <scope>NUCLEOTIDE SEQUENCE [LARGE SCALE MRNA]</scope>
    <source>
        <strain>cv. Columbia</strain>
    </source>
</reference>
<reference key="4">
    <citation type="submission" date="2006-07" db="EMBL/GenBank/DDBJ databases">
        <title>Large-scale analysis of RIKEN Arabidopsis full-length (RAFL) cDNAs.</title>
        <authorList>
            <person name="Totoki Y."/>
            <person name="Seki M."/>
            <person name="Ishida J."/>
            <person name="Nakajima M."/>
            <person name="Enju A."/>
            <person name="Kamiya A."/>
            <person name="Narusaka M."/>
            <person name="Shin-i T."/>
            <person name="Nakagawa M."/>
            <person name="Sakamoto N."/>
            <person name="Oishi K."/>
            <person name="Kohara Y."/>
            <person name="Kobayashi M."/>
            <person name="Toyoda A."/>
            <person name="Sakaki Y."/>
            <person name="Sakurai T."/>
            <person name="Iida K."/>
            <person name="Akiyama K."/>
            <person name="Satou M."/>
            <person name="Toyoda T."/>
            <person name="Konagaya A."/>
            <person name="Carninci P."/>
            <person name="Kawai J."/>
            <person name="Hayashizaki Y."/>
            <person name="Shinozaki K."/>
        </authorList>
    </citation>
    <scope>NUCLEOTIDE SEQUENCE [LARGE SCALE MRNA]</scope>
    <source>
        <strain>cv. Columbia</strain>
    </source>
</reference>
<reference key="5">
    <citation type="journal article" date="2010" name="Plant Biol. 12 Suppl.">
        <title>Expression, localisation and phylogeny of a novel family of plant-specific membrane proteins.</title>
        <authorList>
            <person name="Kasaras A."/>
            <person name="Kunze R."/>
        </authorList>
    </citation>
    <scope>TISSUE SPECIFICITY</scope>
    <scope>SUBCELLULAR LOCATION</scope>
    <scope>DEVELOPMENTAL STAGE</scope>
    <scope>GENE FAMILY</scope>
    <scope>NOMENCLATURE</scope>
    <source>
        <strain>cv. Columbia</strain>
    </source>
</reference>
<comment type="function">
    <text evidence="1">Involved in membrane remodeling.</text>
</comment>
<comment type="subcellular location">
    <subcellularLocation>
        <location evidence="4">Endoplasmic reticulum membrane</location>
        <topology evidence="2">Multi-pass membrane protein</topology>
    </subcellularLocation>
</comment>
<comment type="tissue specificity">
    <text evidence="4">Expressed in leaves, siliques and roots (e.g. root hairs).</text>
</comment>
<comment type="developmental stage">
    <text evidence="4">Accumulates in tissues undergoing senescence.</text>
</comment>
<comment type="similarity">
    <text evidence="6">Belongs to the plant DMP1 protein family.</text>
</comment>
<keyword id="KW-0256">Endoplasmic reticulum</keyword>
<keyword id="KW-0472">Membrane</keyword>
<keyword id="KW-1185">Reference proteome</keyword>
<keyword id="KW-0812">Transmembrane</keyword>
<keyword id="KW-1133">Transmembrane helix</keyword>
<sequence length="213" mass="23207">MSSPSSLTQRNPTSSQEQSESVPQLRRQTSQHAVMSQTLTSAANLANLLPTGTLLAFTLLIPVFTSNGSCDYPTQVLTIVLLTLLSISCFLSSFTDSVKAEDGNVYYGFATRKGMWVFDYPDPDGLGLPNLSKYRIRIIDWIHAVLSVLVFGAVALRDKNAVSCFYPAPEQETKKVLDIVPMGVGVICGMLFLVFPARRHGIGYPVTGDGGRR</sequence>